<reference key="1">
    <citation type="journal article" date="2008" name="Appl. Environ. Microbiol.">
        <title>The genome of Polaromonas sp. strain JS666: insights into the evolution of a hydrocarbon- and xenobiotic-degrading bacterium, and features of relevance to biotechnology.</title>
        <authorList>
            <person name="Mattes T.E."/>
            <person name="Alexander A.K."/>
            <person name="Richardson P.M."/>
            <person name="Munk A.C."/>
            <person name="Han C.S."/>
            <person name="Stothard P."/>
            <person name="Coleman N.V."/>
        </authorList>
    </citation>
    <scope>NUCLEOTIDE SEQUENCE [LARGE SCALE GENOMIC DNA]</scope>
    <source>
        <strain>JS666 / ATCC BAA-500</strain>
    </source>
</reference>
<gene>
    <name evidence="1" type="primary">kynB</name>
    <name type="ordered locus">Bpro_3588</name>
</gene>
<accession>Q126P9</accession>
<protein>
    <recommendedName>
        <fullName evidence="1">Kynurenine formamidase</fullName>
        <shortName evidence="1">KFA</shortName>
        <shortName evidence="1">KFase</shortName>
        <ecNumber evidence="1">3.5.1.9</ecNumber>
    </recommendedName>
    <alternativeName>
        <fullName evidence="1">Arylformamidase</fullName>
    </alternativeName>
    <alternativeName>
        <fullName evidence="1">N-formylkynurenine formamidase</fullName>
        <shortName evidence="1">FKF</shortName>
    </alternativeName>
</protein>
<dbReference type="EC" id="3.5.1.9" evidence="1"/>
<dbReference type="EMBL" id="CP000316">
    <property type="protein sequence ID" value="ABE45493.1"/>
    <property type="molecule type" value="Genomic_DNA"/>
</dbReference>
<dbReference type="RefSeq" id="WP_011484487.1">
    <property type="nucleotide sequence ID" value="NC_007948.1"/>
</dbReference>
<dbReference type="SMR" id="Q126P9"/>
<dbReference type="STRING" id="296591.Bpro_3588"/>
<dbReference type="KEGG" id="pol:Bpro_3588"/>
<dbReference type="eggNOG" id="COG1878">
    <property type="taxonomic scope" value="Bacteria"/>
</dbReference>
<dbReference type="HOGENOM" id="CLU_030671_3_1_4"/>
<dbReference type="OrthoDB" id="9796085at2"/>
<dbReference type="UniPathway" id="UPA00333">
    <property type="reaction ID" value="UER00454"/>
</dbReference>
<dbReference type="Proteomes" id="UP000001983">
    <property type="component" value="Chromosome"/>
</dbReference>
<dbReference type="GO" id="GO:0004061">
    <property type="term" value="F:arylformamidase activity"/>
    <property type="evidence" value="ECO:0000250"/>
    <property type="project" value="UniProtKB"/>
</dbReference>
<dbReference type="GO" id="GO:0004328">
    <property type="term" value="F:formamidase activity"/>
    <property type="evidence" value="ECO:0007669"/>
    <property type="project" value="InterPro"/>
</dbReference>
<dbReference type="GO" id="GO:0008270">
    <property type="term" value="F:zinc ion binding"/>
    <property type="evidence" value="ECO:0007669"/>
    <property type="project" value="UniProtKB-UniRule"/>
</dbReference>
<dbReference type="GO" id="GO:0043420">
    <property type="term" value="P:anthranilate metabolic process"/>
    <property type="evidence" value="ECO:0000250"/>
    <property type="project" value="UniProtKB"/>
</dbReference>
<dbReference type="GO" id="GO:0019441">
    <property type="term" value="P:L-tryptophan catabolic process to kynurenine"/>
    <property type="evidence" value="ECO:0000250"/>
    <property type="project" value="UniProtKB"/>
</dbReference>
<dbReference type="FunFam" id="3.50.30.50:FF:000001">
    <property type="entry name" value="Kynurenine formamidase"/>
    <property type="match status" value="1"/>
</dbReference>
<dbReference type="Gene3D" id="3.50.30.50">
    <property type="entry name" value="Putative cyclase"/>
    <property type="match status" value="1"/>
</dbReference>
<dbReference type="HAMAP" id="MF_01969">
    <property type="entry name" value="KynB"/>
    <property type="match status" value="1"/>
</dbReference>
<dbReference type="InterPro" id="IPR007325">
    <property type="entry name" value="KFase/CYL"/>
</dbReference>
<dbReference type="InterPro" id="IPR037175">
    <property type="entry name" value="KFase_sf"/>
</dbReference>
<dbReference type="InterPro" id="IPR017484">
    <property type="entry name" value="Kynurenine_formamidase_bac"/>
</dbReference>
<dbReference type="NCBIfam" id="TIGR03035">
    <property type="entry name" value="trp_arylform"/>
    <property type="match status" value="1"/>
</dbReference>
<dbReference type="PANTHER" id="PTHR31118">
    <property type="entry name" value="CYCLASE-LIKE PROTEIN 2"/>
    <property type="match status" value="1"/>
</dbReference>
<dbReference type="PANTHER" id="PTHR31118:SF32">
    <property type="entry name" value="KYNURENINE FORMAMIDASE"/>
    <property type="match status" value="1"/>
</dbReference>
<dbReference type="Pfam" id="PF04199">
    <property type="entry name" value="Cyclase"/>
    <property type="match status" value="1"/>
</dbReference>
<dbReference type="SUPFAM" id="SSF102198">
    <property type="entry name" value="Putative cyclase"/>
    <property type="match status" value="1"/>
</dbReference>
<feature type="chain" id="PRO_0000362127" description="Kynurenine formamidase">
    <location>
        <begin position="1"/>
        <end position="221"/>
    </location>
</feature>
<feature type="active site" description="Proton donor/acceptor" evidence="1">
    <location>
        <position position="70"/>
    </location>
</feature>
<feature type="binding site" evidence="1">
    <location>
        <position position="30"/>
    </location>
    <ligand>
        <name>substrate</name>
    </ligand>
</feature>
<feature type="binding site" evidence="1">
    <location>
        <position position="60"/>
    </location>
    <ligand>
        <name>Zn(2+)</name>
        <dbReference type="ChEBI" id="CHEBI:29105"/>
        <label>1</label>
    </ligand>
</feature>
<feature type="binding site" evidence="1">
    <location>
        <position position="64"/>
    </location>
    <ligand>
        <name>Zn(2+)</name>
        <dbReference type="ChEBI" id="CHEBI:29105"/>
        <label>1</label>
    </ligand>
</feature>
<feature type="binding site" evidence="1">
    <location>
        <position position="66"/>
    </location>
    <ligand>
        <name>Zn(2+)</name>
        <dbReference type="ChEBI" id="CHEBI:29105"/>
        <label>1</label>
    </ligand>
</feature>
<feature type="binding site" evidence="1">
    <location>
        <position position="66"/>
    </location>
    <ligand>
        <name>Zn(2+)</name>
        <dbReference type="ChEBI" id="CHEBI:29105"/>
        <label>2</label>
    </ligand>
</feature>
<feature type="binding site" evidence="1">
    <location>
        <position position="172"/>
    </location>
    <ligand>
        <name>Zn(2+)</name>
        <dbReference type="ChEBI" id="CHEBI:29105"/>
        <label>2</label>
    </ligand>
</feature>
<feature type="binding site" evidence="1">
    <location>
        <position position="184"/>
    </location>
    <ligand>
        <name>Zn(2+)</name>
        <dbReference type="ChEBI" id="CHEBI:29105"/>
        <label>1</label>
    </ligand>
</feature>
<feature type="binding site" evidence="1">
    <location>
        <position position="184"/>
    </location>
    <ligand>
        <name>Zn(2+)</name>
        <dbReference type="ChEBI" id="CHEBI:29105"/>
        <label>2</label>
    </ligand>
</feature>
<evidence type="ECO:0000255" key="1">
    <source>
        <dbReference type="HAMAP-Rule" id="MF_01969"/>
    </source>
</evidence>
<proteinExistence type="inferred from homology"/>
<organism>
    <name type="scientific">Polaromonas sp. (strain JS666 / ATCC BAA-500)</name>
    <dbReference type="NCBI Taxonomy" id="296591"/>
    <lineage>
        <taxon>Bacteria</taxon>
        <taxon>Pseudomonadati</taxon>
        <taxon>Pseudomonadota</taxon>
        <taxon>Betaproteobacteria</taxon>
        <taxon>Burkholderiales</taxon>
        <taxon>Comamonadaceae</taxon>
        <taxon>Polaromonas</taxon>
    </lineage>
</organism>
<name>KYNB_POLSJ</name>
<comment type="function">
    <text evidence="1">Catalyzes the hydrolysis of N-formyl-L-kynurenine to L-kynurenine, the second step in the kynurenine pathway of tryptophan degradation.</text>
</comment>
<comment type="catalytic activity">
    <reaction evidence="1">
        <text>N-formyl-L-kynurenine + H2O = L-kynurenine + formate + H(+)</text>
        <dbReference type="Rhea" id="RHEA:13009"/>
        <dbReference type="ChEBI" id="CHEBI:15377"/>
        <dbReference type="ChEBI" id="CHEBI:15378"/>
        <dbReference type="ChEBI" id="CHEBI:15740"/>
        <dbReference type="ChEBI" id="CHEBI:57959"/>
        <dbReference type="ChEBI" id="CHEBI:58629"/>
        <dbReference type="EC" id="3.5.1.9"/>
    </reaction>
</comment>
<comment type="cofactor">
    <cofactor evidence="1">
        <name>Zn(2+)</name>
        <dbReference type="ChEBI" id="CHEBI:29105"/>
    </cofactor>
    <text evidence="1">Binds 2 zinc ions per subunit.</text>
</comment>
<comment type="pathway">
    <text evidence="1">Amino-acid degradation; L-tryptophan degradation via kynurenine pathway; L-kynurenine from L-tryptophan: step 2/2.</text>
</comment>
<comment type="subunit">
    <text evidence="1">Homodimer.</text>
</comment>
<comment type="similarity">
    <text evidence="1">Belongs to the Cyclase 1 superfamily. KynB family.</text>
</comment>
<keyword id="KW-0378">Hydrolase</keyword>
<keyword id="KW-0479">Metal-binding</keyword>
<keyword id="KW-1185">Reference proteome</keyword>
<keyword id="KW-0823">Tryptophan catabolism</keyword>
<keyword id="KW-0862">Zinc</keyword>
<sequence>MTARVLPSTTAKPLRLWDISPPVAPGSPVFPGDTPYQQQWAASIAPGCPVNVSTLTLSPHIGAHADAPLHYDPQGATIGAVDLTPYIGPCRVIHAIAKGPLIEWEHLAHAVHDLPPRVLVRTYARMPVERWDPTLAAYAPETVERLAALGVKLIGIDTASIDPAGSKTLDSHQVIRQRGLRVLENLVLDEVPEGDYELIALPLKLMTADASPVRAVLRELP</sequence>